<organism>
    <name type="scientific">Mesocricetus auratus</name>
    <name type="common">Golden hamster</name>
    <dbReference type="NCBI Taxonomy" id="10036"/>
    <lineage>
        <taxon>Eukaryota</taxon>
        <taxon>Metazoa</taxon>
        <taxon>Chordata</taxon>
        <taxon>Craniata</taxon>
        <taxon>Vertebrata</taxon>
        <taxon>Euteleostomi</taxon>
        <taxon>Mammalia</taxon>
        <taxon>Eutheria</taxon>
        <taxon>Euarchontoglires</taxon>
        <taxon>Glires</taxon>
        <taxon>Rodentia</taxon>
        <taxon>Myomorpha</taxon>
        <taxon>Muroidea</taxon>
        <taxon>Cricetidae</taxon>
        <taxon>Cricetinae</taxon>
        <taxon>Mesocricetus</taxon>
    </lineage>
</organism>
<feature type="chain" id="PRO_0000398649" description="Polyprenal reductase">
    <location>
        <begin position="1"/>
        <end position="330"/>
    </location>
</feature>
<feature type="topological domain" description="Cytoplasmic" evidence="2">
    <location>
        <begin position="1"/>
        <end position="19"/>
    </location>
</feature>
<feature type="transmembrane region" description="Helical" evidence="2">
    <location>
        <begin position="20"/>
        <end position="40"/>
    </location>
</feature>
<feature type="topological domain" description="Lumenal" evidence="2">
    <location>
        <begin position="41"/>
        <end position="74"/>
    </location>
</feature>
<feature type="transmembrane region" description="Helical" evidence="2">
    <location>
        <begin position="75"/>
        <end position="95"/>
    </location>
</feature>
<feature type="topological domain" description="Cytoplasmic" evidence="2">
    <location>
        <begin position="96"/>
        <end position="132"/>
    </location>
</feature>
<feature type="transmembrane region" description="Helical" evidence="2">
    <location>
        <begin position="133"/>
        <end position="153"/>
    </location>
</feature>
<feature type="topological domain" description="Lumenal" evidence="2">
    <location>
        <begin position="154"/>
        <end position="168"/>
    </location>
</feature>
<feature type="transmembrane region" description="Helical" evidence="2">
    <location>
        <begin position="169"/>
        <end position="189"/>
    </location>
</feature>
<feature type="topological domain" description="Cytoplasmic" evidence="2">
    <location>
        <begin position="190"/>
        <end position="206"/>
    </location>
</feature>
<feature type="transmembrane region" description="Helical" evidence="2">
    <location>
        <begin position="207"/>
        <end position="227"/>
    </location>
</feature>
<feature type="topological domain" description="Lumenal" evidence="2">
    <location>
        <begin position="228"/>
        <end position="277"/>
    </location>
</feature>
<feature type="transmembrane region" description="Helical" evidence="2">
    <location>
        <begin position="278"/>
        <end position="298"/>
    </location>
</feature>
<feature type="topological domain" description="Cytoplasmic" evidence="2">
    <location>
        <begin position="299"/>
        <end position="330"/>
    </location>
</feature>
<name>SR5A3_MESAU</name>
<evidence type="ECO:0000250" key="1">
    <source>
        <dbReference type="UniProtKB" id="Q9H8P0"/>
    </source>
</evidence>
<evidence type="ECO:0000255" key="2"/>
<evidence type="ECO:0000303" key="3">
    <source ref="1"/>
</evidence>
<evidence type="ECO:0000305" key="4"/>
<dbReference type="EC" id="1.3.1.94" evidence="1"/>
<dbReference type="EC" id="1.3.1.22" evidence="1"/>
<dbReference type="EMBL" id="FJ851160">
    <property type="protein sequence ID" value="ACV30167.1"/>
    <property type="molecule type" value="mRNA"/>
</dbReference>
<dbReference type="RefSeq" id="NP_001268635.1">
    <property type="nucleotide sequence ID" value="NM_001281706.1"/>
</dbReference>
<dbReference type="SMR" id="C7T2J9"/>
<dbReference type="STRING" id="10036.ENSMAUP00000003003"/>
<dbReference type="GeneID" id="101843963"/>
<dbReference type="KEGG" id="maua:101843963"/>
<dbReference type="CTD" id="79644"/>
<dbReference type="eggNOG" id="KOG1640">
    <property type="taxonomic scope" value="Eukaryota"/>
</dbReference>
<dbReference type="OrthoDB" id="541710at2759"/>
<dbReference type="UniPathway" id="UPA00378"/>
<dbReference type="Proteomes" id="UP000189706">
    <property type="component" value="Unplaced"/>
</dbReference>
<dbReference type="GO" id="GO:0005783">
    <property type="term" value="C:endoplasmic reticulum"/>
    <property type="evidence" value="ECO:0000250"/>
    <property type="project" value="UniProtKB"/>
</dbReference>
<dbReference type="GO" id="GO:0005789">
    <property type="term" value="C:endoplasmic reticulum membrane"/>
    <property type="evidence" value="ECO:0007669"/>
    <property type="project" value="UniProtKB-SubCell"/>
</dbReference>
<dbReference type="GO" id="GO:0047751">
    <property type="term" value="F:3-oxo-5-alpha-steroid 4-dehydrogenase (NADP+) activity"/>
    <property type="evidence" value="ECO:0000250"/>
    <property type="project" value="UniProtKB"/>
</dbReference>
<dbReference type="GO" id="GO:0016628">
    <property type="term" value="F:oxidoreductase activity, acting on the CH-CH group of donors, NAD or NADP as acceptor"/>
    <property type="evidence" value="ECO:0000250"/>
    <property type="project" value="UniProtKB"/>
</dbReference>
<dbReference type="GO" id="GO:0160198">
    <property type="term" value="F:polyprenal reductase activity"/>
    <property type="evidence" value="ECO:0000250"/>
    <property type="project" value="UniProtKB"/>
</dbReference>
<dbReference type="GO" id="GO:0019408">
    <property type="term" value="P:dolichol biosynthetic process"/>
    <property type="evidence" value="ECO:0000250"/>
    <property type="project" value="UniProtKB"/>
</dbReference>
<dbReference type="GO" id="GO:0019348">
    <property type="term" value="P:dolichol metabolic process"/>
    <property type="evidence" value="ECO:0000250"/>
    <property type="project" value="UniProtKB"/>
</dbReference>
<dbReference type="GO" id="GO:0006488">
    <property type="term" value="P:dolichol-linked oligosaccharide biosynthetic process"/>
    <property type="evidence" value="ECO:0000250"/>
    <property type="project" value="UniProtKB"/>
</dbReference>
<dbReference type="GO" id="GO:0016095">
    <property type="term" value="P:polyprenol catabolic process"/>
    <property type="evidence" value="ECO:0000250"/>
    <property type="project" value="UniProtKB"/>
</dbReference>
<dbReference type="InterPro" id="IPR001104">
    <property type="entry name" value="3-oxo-5_a-steroid_4-DH_C"/>
</dbReference>
<dbReference type="InterPro" id="IPR039698">
    <property type="entry name" value="Dfg10/SRD5A3"/>
</dbReference>
<dbReference type="PANTHER" id="PTHR14624">
    <property type="entry name" value="DFG10 PROTEIN"/>
    <property type="match status" value="1"/>
</dbReference>
<dbReference type="PANTHER" id="PTHR14624:SF0">
    <property type="entry name" value="POLYPRENOL REDUCTASE"/>
    <property type="match status" value="1"/>
</dbReference>
<dbReference type="Pfam" id="PF02544">
    <property type="entry name" value="Steroid_dh"/>
    <property type="match status" value="1"/>
</dbReference>
<dbReference type="PROSITE" id="PS50244">
    <property type="entry name" value="S5A_REDUCTASE"/>
    <property type="match status" value="1"/>
</dbReference>
<proteinExistence type="evidence at transcript level"/>
<reference key="1">
    <citation type="submission" date="2009-03" db="EMBL/GenBank/DDBJ databases">
        <title>Cloning, sequence analysis and tissue distribution of the steroid 5alpha-reductase 3 (Srd5a3) full-length cDNA from Syrian hamster.</title>
        <authorList>
            <person name="Vilchis F."/>
            <person name="Ramos L."/>
            <person name="Chavez B."/>
        </authorList>
    </citation>
    <scope>NUCLEOTIDE SEQUENCE [MRNA]</scope>
    <source>
        <tissue>Harderian gland</tissue>
    </source>
</reference>
<keyword id="KW-0256">Endoplasmic reticulum</keyword>
<keyword id="KW-0443">Lipid metabolism</keyword>
<keyword id="KW-0472">Membrane</keyword>
<keyword id="KW-0521">NADP</keyword>
<keyword id="KW-0560">Oxidoreductase</keyword>
<keyword id="KW-1185">Reference proteome</keyword>
<keyword id="KW-0812">Transmembrane</keyword>
<keyword id="KW-1133">Transmembrane helix</keyword>
<gene>
    <name evidence="3" type="primary">Srd5a3</name>
</gene>
<accession>C7T2J9</accession>
<sequence length="330" mass="38164">MASWVGTELSALNPLRTLWLALAAAFLLALLLQLAPAGLLPNCALFQDLIRYGKTKLSGPRRPAVCRAFDVPKRYFSHFYVVSVLWNGFLLWFLSRSLFLGAPFPNWLRALLRTLGSTQFRALEMESKASQMLVGELALSAFLVLVFLWVHSVRRLFECFYISVFSNAVMHVVQYCFGLVYYVLVGLTVLSQVPMDDKNVYMLGKNLLLPARWFHVLGMMMFLWSSAHQYECHVILSNLRRNKKGAIVHCQHRIPFGDWFEYVSSANYLAELMIYISMAVTFGFHNFTWWLVVAYVFFCQALSAFFNHKFYKSTFVSYPKHRKAFLPFLF</sequence>
<protein>
    <recommendedName>
        <fullName evidence="4">Polyprenal reductase</fullName>
        <ecNumber evidence="1">1.3.1.94</ecNumber>
    </recommendedName>
    <alternativeName>
        <fullName>3-oxo-5-alpha-steroid 4-dehydrogenase 3</fullName>
        <ecNumber evidence="1">1.3.1.22</ecNumber>
    </alternativeName>
    <alternativeName>
        <fullName evidence="3">Steroid 5-alpha-reductase 3</fullName>
        <shortName>S5AR 3</shortName>
        <shortName>SR type 3</shortName>
    </alternativeName>
</protein>
<comment type="function">
    <text evidence="1">Plays a key role in early steps of protein N-linked glycosylation by being involved in the conversion of polyprenol into dolichol (By similarity). Acts as a polyprenal reductase that mediates the reduction of polyprenal into dolichal in a NADP-dependent mechanism (By similarity). Dolichols are required for the synthesis of dolichol-linked monosaccharides and the oligosaccharide precursor used for N-glycosylation (By similarity). Also able to convert testosterone (T) into 5-alpha-dihydrotestosterone (DHT) (By similarity).</text>
</comment>
<comment type="catalytic activity">
    <reaction evidence="1">
        <text>a di-trans,poly-cis-dolichal + NADP(+) = a di-trans,poly-cis-polyprenal + NADPH + H(+)</text>
        <dbReference type="Rhea" id="RHEA:80727"/>
        <dbReference type="Rhea" id="RHEA-COMP:19536"/>
        <dbReference type="Rhea" id="RHEA-COMP:19537"/>
        <dbReference type="ChEBI" id="CHEBI:15378"/>
        <dbReference type="ChEBI" id="CHEBI:57783"/>
        <dbReference type="ChEBI" id="CHEBI:58349"/>
        <dbReference type="ChEBI" id="CHEBI:231623"/>
        <dbReference type="ChEBI" id="CHEBI:231637"/>
        <dbReference type="EC" id="1.3.1.94"/>
    </reaction>
    <physiologicalReaction direction="right-to-left" evidence="1">
        <dbReference type="Rhea" id="RHEA:80729"/>
    </physiologicalReaction>
</comment>
<comment type="catalytic activity">
    <reaction evidence="1">
        <text>a 3-oxo-5alpha-steroid + NADP(+) = a 3-oxo-Delta(4)-steroid + NADPH + H(+)</text>
        <dbReference type="Rhea" id="RHEA:54384"/>
        <dbReference type="ChEBI" id="CHEBI:13601"/>
        <dbReference type="ChEBI" id="CHEBI:15378"/>
        <dbReference type="ChEBI" id="CHEBI:47909"/>
        <dbReference type="ChEBI" id="CHEBI:57783"/>
        <dbReference type="ChEBI" id="CHEBI:58349"/>
        <dbReference type="EC" id="1.3.1.22"/>
    </reaction>
    <physiologicalReaction direction="right-to-left" evidence="1">
        <dbReference type="Rhea" id="RHEA:54386"/>
    </physiologicalReaction>
</comment>
<comment type="catalytic activity">
    <reaction evidence="1">
        <text>androst-4-ene-3,17-dione + NADPH + H(+) = 5alpha-androstan-3,17-dione + NADP(+)</text>
        <dbReference type="Rhea" id="RHEA:50816"/>
        <dbReference type="ChEBI" id="CHEBI:15378"/>
        <dbReference type="ChEBI" id="CHEBI:15994"/>
        <dbReference type="ChEBI" id="CHEBI:16422"/>
        <dbReference type="ChEBI" id="CHEBI:57783"/>
        <dbReference type="ChEBI" id="CHEBI:58349"/>
    </reaction>
    <physiologicalReaction direction="right-to-left" evidence="1">
        <dbReference type="Rhea" id="RHEA:50818"/>
    </physiologicalReaction>
</comment>
<comment type="catalytic activity">
    <reaction evidence="1">
        <text>17beta-hydroxy-5alpha-androstan-3-one + NADP(+) = testosterone + NADPH + H(+)</text>
        <dbReference type="Rhea" id="RHEA:50820"/>
        <dbReference type="ChEBI" id="CHEBI:15378"/>
        <dbReference type="ChEBI" id="CHEBI:16330"/>
        <dbReference type="ChEBI" id="CHEBI:17347"/>
        <dbReference type="ChEBI" id="CHEBI:57783"/>
        <dbReference type="ChEBI" id="CHEBI:58349"/>
        <dbReference type="EC" id="1.3.1.22"/>
    </reaction>
    <physiologicalReaction direction="right-to-left" evidence="1">
        <dbReference type="Rhea" id="RHEA:50822"/>
    </physiologicalReaction>
</comment>
<comment type="pathway">
    <text evidence="1">Protein modification; protein glycosylation.</text>
</comment>
<comment type="subcellular location">
    <subcellularLocation>
        <location evidence="1">Endoplasmic reticulum membrane</location>
        <topology evidence="1">Multi-pass membrane protein</topology>
    </subcellularLocation>
</comment>
<comment type="similarity">
    <text evidence="4">Belongs to the steroid 5-alpha reductase family. Polyprenal reductase subfamily.</text>
</comment>